<accession>A6LUE1</accession>
<organism>
    <name type="scientific">Clostridium beijerinckii (strain ATCC 51743 / NCIMB 8052)</name>
    <name type="common">Clostridium acetobutylicum</name>
    <dbReference type="NCBI Taxonomy" id="290402"/>
    <lineage>
        <taxon>Bacteria</taxon>
        <taxon>Bacillati</taxon>
        <taxon>Bacillota</taxon>
        <taxon>Clostridia</taxon>
        <taxon>Eubacteriales</taxon>
        <taxon>Clostridiaceae</taxon>
        <taxon>Clostridium</taxon>
    </lineage>
</organism>
<proteinExistence type="inferred from homology"/>
<comment type="function">
    <text evidence="1">Redox regulated molecular chaperone. Protects both thermally unfolding and oxidatively damaged proteins from irreversible aggregation. Plays an important role in the bacterial defense system toward oxidative stress.</text>
</comment>
<comment type="subcellular location">
    <subcellularLocation>
        <location evidence="1">Cytoplasm</location>
    </subcellularLocation>
</comment>
<comment type="PTM">
    <text evidence="1">Under oxidizing conditions two disulfide bonds are formed involving the reactive cysteines. Under reducing conditions zinc is bound to the reactive cysteines and the protein is inactive.</text>
</comment>
<comment type="similarity">
    <text evidence="1">Belongs to the HSP33 family.</text>
</comment>
<sequence length="293" mass="31907">MKDKIVRATAKDGMVRIIAGITTNLVNEGCKIHECTPVASAALGRMLTAGTLIGTTLKSEKEVVTLKINGNGEINGITVTAHSDASVKGFIGNPYVDRPLNEKGKLDVGGAIGTDGILYVIKDLGLRDPYIGQVPIQTGEIAEDFAYYFTASEQTPSAVSLGVLVDRDLSIKAAGGFIVQMMPGADELLADVITYRLEEIPPITTLISEGKTIEEILEYIFDGMDLKVLDSLTPEYKCDCSRERVEKALISIGKETLQEIYDDKKNEEIVCNFCNTKYEFTNDEIGELLNNSR</sequence>
<evidence type="ECO:0000255" key="1">
    <source>
        <dbReference type="HAMAP-Rule" id="MF_00117"/>
    </source>
</evidence>
<keyword id="KW-0143">Chaperone</keyword>
<keyword id="KW-0963">Cytoplasm</keyword>
<keyword id="KW-1015">Disulfide bond</keyword>
<keyword id="KW-0676">Redox-active center</keyword>
<keyword id="KW-0862">Zinc</keyword>
<dbReference type="EMBL" id="CP000721">
    <property type="protein sequence ID" value="ABR33971.1"/>
    <property type="molecule type" value="Genomic_DNA"/>
</dbReference>
<dbReference type="RefSeq" id="WP_011969123.1">
    <property type="nucleotide sequence ID" value="NC_009617.1"/>
</dbReference>
<dbReference type="SMR" id="A6LUE1"/>
<dbReference type="KEGG" id="cbe:Cbei_1800"/>
<dbReference type="eggNOG" id="COG1281">
    <property type="taxonomic scope" value="Bacteria"/>
</dbReference>
<dbReference type="HOGENOM" id="CLU_054493_1_0_9"/>
<dbReference type="Proteomes" id="UP000000565">
    <property type="component" value="Chromosome"/>
</dbReference>
<dbReference type="GO" id="GO:0005737">
    <property type="term" value="C:cytoplasm"/>
    <property type="evidence" value="ECO:0007669"/>
    <property type="project" value="UniProtKB-SubCell"/>
</dbReference>
<dbReference type="GO" id="GO:0044183">
    <property type="term" value="F:protein folding chaperone"/>
    <property type="evidence" value="ECO:0007669"/>
    <property type="project" value="TreeGrafter"/>
</dbReference>
<dbReference type="GO" id="GO:0051082">
    <property type="term" value="F:unfolded protein binding"/>
    <property type="evidence" value="ECO:0007669"/>
    <property type="project" value="UniProtKB-UniRule"/>
</dbReference>
<dbReference type="GO" id="GO:0042026">
    <property type="term" value="P:protein refolding"/>
    <property type="evidence" value="ECO:0007669"/>
    <property type="project" value="TreeGrafter"/>
</dbReference>
<dbReference type="CDD" id="cd00498">
    <property type="entry name" value="Hsp33"/>
    <property type="match status" value="1"/>
</dbReference>
<dbReference type="Gene3D" id="3.55.30.10">
    <property type="entry name" value="Hsp33 domain"/>
    <property type="match status" value="1"/>
</dbReference>
<dbReference type="Gene3D" id="3.90.1280.10">
    <property type="entry name" value="HSP33 redox switch-like"/>
    <property type="match status" value="1"/>
</dbReference>
<dbReference type="HAMAP" id="MF_00117">
    <property type="entry name" value="HslO"/>
    <property type="match status" value="1"/>
</dbReference>
<dbReference type="InterPro" id="IPR000397">
    <property type="entry name" value="Heat_shock_Hsp33"/>
</dbReference>
<dbReference type="InterPro" id="IPR016154">
    <property type="entry name" value="Heat_shock_Hsp33_C"/>
</dbReference>
<dbReference type="InterPro" id="IPR016153">
    <property type="entry name" value="Heat_shock_Hsp33_N"/>
</dbReference>
<dbReference type="NCBIfam" id="NF001033">
    <property type="entry name" value="PRK00114.1"/>
    <property type="match status" value="1"/>
</dbReference>
<dbReference type="PANTHER" id="PTHR30111">
    <property type="entry name" value="33 KDA CHAPERONIN"/>
    <property type="match status" value="1"/>
</dbReference>
<dbReference type="PANTHER" id="PTHR30111:SF1">
    <property type="entry name" value="33 KDA CHAPERONIN"/>
    <property type="match status" value="1"/>
</dbReference>
<dbReference type="Pfam" id="PF01430">
    <property type="entry name" value="HSP33"/>
    <property type="match status" value="1"/>
</dbReference>
<dbReference type="PIRSF" id="PIRSF005261">
    <property type="entry name" value="Heat_shock_Hsp33"/>
    <property type="match status" value="1"/>
</dbReference>
<dbReference type="SUPFAM" id="SSF64397">
    <property type="entry name" value="Hsp33 domain"/>
    <property type="match status" value="1"/>
</dbReference>
<dbReference type="SUPFAM" id="SSF118352">
    <property type="entry name" value="HSP33 redox switch-like"/>
    <property type="match status" value="1"/>
</dbReference>
<name>HSLO_CLOB8</name>
<protein>
    <recommendedName>
        <fullName evidence="1">33 kDa chaperonin</fullName>
    </recommendedName>
    <alternativeName>
        <fullName evidence="1">Heat shock protein 33 homolog</fullName>
        <shortName evidence="1">HSP33</shortName>
    </alternativeName>
</protein>
<gene>
    <name evidence="1" type="primary">hslO</name>
    <name type="ordered locus">Cbei_1800</name>
</gene>
<feature type="chain" id="PRO_1000076080" description="33 kDa chaperonin">
    <location>
        <begin position="1"/>
        <end position="293"/>
    </location>
</feature>
<feature type="disulfide bond" description="Redox-active" evidence="1">
    <location>
        <begin position="238"/>
        <end position="240"/>
    </location>
</feature>
<feature type="disulfide bond" description="Redox-active" evidence="1">
    <location>
        <begin position="271"/>
        <end position="274"/>
    </location>
</feature>
<reference key="1">
    <citation type="submission" date="2007-06" db="EMBL/GenBank/DDBJ databases">
        <title>Complete sequence of Clostridium beijerinckii NCIMB 8052.</title>
        <authorList>
            <consortium name="US DOE Joint Genome Institute"/>
            <person name="Copeland A."/>
            <person name="Lucas S."/>
            <person name="Lapidus A."/>
            <person name="Barry K."/>
            <person name="Detter J.C."/>
            <person name="Glavina del Rio T."/>
            <person name="Hammon N."/>
            <person name="Israni S."/>
            <person name="Dalin E."/>
            <person name="Tice H."/>
            <person name="Pitluck S."/>
            <person name="Sims D."/>
            <person name="Brettin T."/>
            <person name="Bruce D."/>
            <person name="Tapia R."/>
            <person name="Brainard J."/>
            <person name="Schmutz J."/>
            <person name="Larimer F."/>
            <person name="Land M."/>
            <person name="Hauser L."/>
            <person name="Kyrpides N."/>
            <person name="Mikhailova N."/>
            <person name="Bennet G."/>
            <person name="Cann I."/>
            <person name="Chen J.-S."/>
            <person name="Contreras A.L."/>
            <person name="Jones D."/>
            <person name="Kashket E."/>
            <person name="Mitchell W."/>
            <person name="Stoddard S."/>
            <person name="Schwarz W."/>
            <person name="Qureshi N."/>
            <person name="Young M."/>
            <person name="Shi Z."/>
            <person name="Ezeji T."/>
            <person name="White B."/>
            <person name="Blaschek H."/>
            <person name="Richardson P."/>
        </authorList>
    </citation>
    <scope>NUCLEOTIDE SEQUENCE [LARGE SCALE GENOMIC DNA]</scope>
    <source>
        <strain>ATCC 51743 / NCIMB 8052</strain>
    </source>
</reference>